<protein>
    <recommendedName>
        <fullName evidence="1">Biotin synthase</fullName>
        <ecNumber evidence="1">2.8.1.6</ecNumber>
    </recommendedName>
</protein>
<sequence length="346" mass="38630">MAHHPRWTLSQVTELFEKPLLDLLFEAQQVHRQHFDPRQVQVSTLLSIKTGACPEDCKYCPQSSRYKTGLEAERLMEVEQVLESARKAKAAGSTRFCMGAAWKNPHERDMPYLEQMVQGVKAMGLEACMTLGTLSESQAQRLADAGLDYYNHNLDTSPEFYGNIITTRTYQERLDTLEKVRDAGIKVCSGGIVGLGETVKDRAGLLLQLANLPTPPESVPINMLVKVKGTPLADNDDVDAFDFIRTIAVARIMMPTSYVRLSAGREQMNEQTQAMCFMAGANSIFYGCKLLTTPNPEEDKDLQLFRKLGLNPQQTAVLAGDNEQQQRLEQALMTPDTDEYYNAAAL</sequence>
<organism>
    <name type="scientific">Escherichia fergusonii (strain ATCC 35469 / DSM 13698 / CCUG 18766 / IAM 14443 / JCM 21226 / LMG 7866 / NBRC 102419 / NCTC 12128 / CDC 0568-73)</name>
    <dbReference type="NCBI Taxonomy" id="585054"/>
    <lineage>
        <taxon>Bacteria</taxon>
        <taxon>Pseudomonadati</taxon>
        <taxon>Pseudomonadota</taxon>
        <taxon>Gammaproteobacteria</taxon>
        <taxon>Enterobacterales</taxon>
        <taxon>Enterobacteriaceae</taxon>
        <taxon>Escherichia</taxon>
    </lineage>
</organism>
<reference key="1">
    <citation type="journal article" date="2009" name="PLoS Genet.">
        <title>Organised genome dynamics in the Escherichia coli species results in highly diverse adaptive paths.</title>
        <authorList>
            <person name="Touchon M."/>
            <person name="Hoede C."/>
            <person name="Tenaillon O."/>
            <person name="Barbe V."/>
            <person name="Baeriswyl S."/>
            <person name="Bidet P."/>
            <person name="Bingen E."/>
            <person name="Bonacorsi S."/>
            <person name="Bouchier C."/>
            <person name="Bouvet O."/>
            <person name="Calteau A."/>
            <person name="Chiapello H."/>
            <person name="Clermont O."/>
            <person name="Cruveiller S."/>
            <person name="Danchin A."/>
            <person name="Diard M."/>
            <person name="Dossat C."/>
            <person name="Karoui M.E."/>
            <person name="Frapy E."/>
            <person name="Garry L."/>
            <person name="Ghigo J.M."/>
            <person name="Gilles A.M."/>
            <person name="Johnson J."/>
            <person name="Le Bouguenec C."/>
            <person name="Lescat M."/>
            <person name="Mangenot S."/>
            <person name="Martinez-Jehanne V."/>
            <person name="Matic I."/>
            <person name="Nassif X."/>
            <person name="Oztas S."/>
            <person name="Petit M.A."/>
            <person name="Pichon C."/>
            <person name="Rouy Z."/>
            <person name="Ruf C.S."/>
            <person name="Schneider D."/>
            <person name="Tourret J."/>
            <person name="Vacherie B."/>
            <person name="Vallenet D."/>
            <person name="Medigue C."/>
            <person name="Rocha E.P.C."/>
            <person name="Denamur E."/>
        </authorList>
    </citation>
    <scope>NUCLEOTIDE SEQUENCE [LARGE SCALE GENOMIC DNA]</scope>
    <source>
        <strain>ATCC 35469 / DSM 13698 / BCRC 15582 / CCUG 18766 / IAM 14443 / JCM 21226 / LMG 7866 / NBRC 102419 / NCTC 12128 / CDC 0568-73</strain>
    </source>
</reference>
<comment type="function">
    <text evidence="1">Catalyzes the conversion of dethiobiotin (DTB) to biotin by the insertion of a sulfur atom into dethiobiotin via a radical-based mechanism.</text>
</comment>
<comment type="catalytic activity">
    <reaction evidence="1">
        <text>(4R,5S)-dethiobiotin + (sulfur carrier)-SH + 2 reduced [2Fe-2S]-[ferredoxin] + 2 S-adenosyl-L-methionine = (sulfur carrier)-H + biotin + 2 5'-deoxyadenosine + 2 L-methionine + 2 oxidized [2Fe-2S]-[ferredoxin]</text>
        <dbReference type="Rhea" id="RHEA:22060"/>
        <dbReference type="Rhea" id="RHEA-COMP:10000"/>
        <dbReference type="Rhea" id="RHEA-COMP:10001"/>
        <dbReference type="Rhea" id="RHEA-COMP:14737"/>
        <dbReference type="Rhea" id="RHEA-COMP:14739"/>
        <dbReference type="ChEBI" id="CHEBI:17319"/>
        <dbReference type="ChEBI" id="CHEBI:29917"/>
        <dbReference type="ChEBI" id="CHEBI:33737"/>
        <dbReference type="ChEBI" id="CHEBI:33738"/>
        <dbReference type="ChEBI" id="CHEBI:57586"/>
        <dbReference type="ChEBI" id="CHEBI:57844"/>
        <dbReference type="ChEBI" id="CHEBI:59789"/>
        <dbReference type="ChEBI" id="CHEBI:64428"/>
        <dbReference type="ChEBI" id="CHEBI:149473"/>
        <dbReference type="EC" id="2.8.1.6"/>
    </reaction>
</comment>
<comment type="cofactor">
    <cofactor evidence="1">
        <name>[4Fe-4S] cluster</name>
        <dbReference type="ChEBI" id="CHEBI:49883"/>
    </cofactor>
    <text evidence="1">Binds 1 [4Fe-4S] cluster. The cluster is coordinated with 3 cysteines and an exchangeable S-adenosyl-L-methionine.</text>
</comment>
<comment type="cofactor">
    <cofactor evidence="1">
        <name>[2Fe-2S] cluster</name>
        <dbReference type="ChEBI" id="CHEBI:190135"/>
    </cofactor>
    <text evidence="1">Binds 1 [2Fe-2S] cluster. The cluster is coordinated with 3 cysteines and 1 arginine.</text>
</comment>
<comment type="pathway">
    <text evidence="1">Cofactor biosynthesis; biotin biosynthesis; biotin from 7,8-diaminononanoate: step 2/2.</text>
</comment>
<comment type="subunit">
    <text evidence="1">Homodimer.</text>
</comment>
<comment type="similarity">
    <text evidence="1">Belongs to the radical SAM superfamily. Biotin synthase family.</text>
</comment>
<accession>B7LJY8</accession>
<gene>
    <name evidence="1" type="primary">bioB</name>
    <name type="ordered locus">EFER_2338</name>
</gene>
<name>BIOB_ESCF3</name>
<feature type="chain" id="PRO_0000381383" description="Biotin synthase">
    <location>
        <begin position="1"/>
        <end position="346"/>
    </location>
</feature>
<feature type="domain" description="Radical SAM core" evidence="2">
    <location>
        <begin position="38"/>
        <end position="256"/>
    </location>
</feature>
<feature type="binding site" evidence="1">
    <location>
        <position position="53"/>
    </location>
    <ligand>
        <name>[4Fe-4S] cluster</name>
        <dbReference type="ChEBI" id="CHEBI:49883"/>
        <note>4Fe-4S-S-AdoMet</note>
    </ligand>
</feature>
<feature type="binding site" evidence="1">
    <location>
        <position position="57"/>
    </location>
    <ligand>
        <name>[4Fe-4S] cluster</name>
        <dbReference type="ChEBI" id="CHEBI:49883"/>
        <note>4Fe-4S-S-AdoMet</note>
    </ligand>
</feature>
<feature type="binding site" evidence="1">
    <location>
        <position position="60"/>
    </location>
    <ligand>
        <name>[4Fe-4S] cluster</name>
        <dbReference type="ChEBI" id="CHEBI:49883"/>
        <note>4Fe-4S-S-AdoMet</note>
    </ligand>
</feature>
<feature type="binding site" evidence="1">
    <location>
        <position position="97"/>
    </location>
    <ligand>
        <name>[2Fe-2S] cluster</name>
        <dbReference type="ChEBI" id="CHEBI:190135"/>
    </ligand>
</feature>
<feature type="binding site" evidence="1">
    <location>
        <position position="128"/>
    </location>
    <ligand>
        <name>[2Fe-2S] cluster</name>
        <dbReference type="ChEBI" id="CHEBI:190135"/>
    </ligand>
</feature>
<feature type="binding site" evidence="1">
    <location>
        <position position="188"/>
    </location>
    <ligand>
        <name>[2Fe-2S] cluster</name>
        <dbReference type="ChEBI" id="CHEBI:190135"/>
    </ligand>
</feature>
<feature type="binding site" evidence="1">
    <location>
        <position position="260"/>
    </location>
    <ligand>
        <name>[2Fe-2S] cluster</name>
        <dbReference type="ChEBI" id="CHEBI:190135"/>
    </ligand>
</feature>
<proteinExistence type="inferred from homology"/>
<dbReference type="EC" id="2.8.1.6" evidence="1"/>
<dbReference type="EMBL" id="CU928158">
    <property type="protein sequence ID" value="CAQ89838.1"/>
    <property type="molecule type" value="Genomic_DNA"/>
</dbReference>
<dbReference type="RefSeq" id="WP_000930075.1">
    <property type="nucleotide sequence ID" value="NC_011740.1"/>
</dbReference>
<dbReference type="SMR" id="B7LJY8"/>
<dbReference type="GeneID" id="75056633"/>
<dbReference type="KEGG" id="efe:EFER_2338"/>
<dbReference type="HOGENOM" id="CLU_033172_1_2_6"/>
<dbReference type="OrthoDB" id="9786826at2"/>
<dbReference type="UniPathway" id="UPA00078">
    <property type="reaction ID" value="UER00162"/>
</dbReference>
<dbReference type="Proteomes" id="UP000000745">
    <property type="component" value="Chromosome"/>
</dbReference>
<dbReference type="GO" id="GO:0051537">
    <property type="term" value="F:2 iron, 2 sulfur cluster binding"/>
    <property type="evidence" value="ECO:0007669"/>
    <property type="project" value="UniProtKB-KW"/>
</dbReference>
<dbReference type="GO" id="GO:0051539">
    <property type="term" value="F:4 iron, 4 sulfur cluster binding"/>
    <property type="evidence" value="ECO:0007669"/>
    <property type="project" value="UniProtKB-KW"/>
</dbReference>
<dbReference type="GO" id="GO:0004076">
    <property type="term" value="F:biotin synthase activity"/>
    <property type="evidence" value="ECO:0007669"/>
    <property type="project" value="UniProtKB-UniRule"/>
</dbReference>
<dbReference type="GO" id="GO:0005506">
    <property type="term" value="F:iron ion binding"/>
    <property type="evidence" value="ECO:0007669"/>
    <property type="project" value="UniProtKB-UniRule"/>
</dbReference>
<dbReference type="GO" id="GO:0009102">
    <property type="term" value="P:biotin biosynthetic process"/>
    <property type="evidence" value="ECO:0007669"/>
    <property type="project" value="UniProtKB-UniRule"/>
</dbReference>
<dbReference type="CDD" id="cd01335">
    <property type="entry name" value="Radical_SAM"/>
    <property type="match status" value="1"/>
</dbReference>
<dbReference type="FunFam" id="3.20.20.70:FF:000011">
    <property type="entry name" value="Biotin synthase"/>
    <property type="match status" value="1"/>
</dbReference>
<dbReference type="Gene3D" id="3.20.20.70">
    <property type="entry name" value="Aldolase class I"/>
    <property type="match status" value="1"/>
</dbReference>
<dbReference type="HAMAP" id="MF_01694">
    <property type="entry name" value="BioB"/>
    <property type="match status" value="1"/>
</dbReference>
<dbReference type="InterPro" id="IPR013785">
    <property type="entry name" value="Aldolase_TIM"/>
</dbReference>
<dbReference type="InterPro" id="IPR010722">
    <property type="entry name" value="BATS_dom"/>
</dbReference>
<dbReference type="InterPro" id="IPR002684">
    <property type="entry name" value="Biotin_synth/BioAB"/>
</dbReference>
<dbReference type="InterPro" id="IPR024177">
    <property type="entry name" value="Biotin_synthase"/>
</dbReference>
<dbReference type="InterPro" id="IPR006638">
    <property type="entry name" value="Elp3/MiaA/NifB-like_rSAM"/>
</dbReference>
<dbReference type="InterPro" id="IPR007197">
    <property type="entry name" value="rSAM"/>
</dbReference>
<dbReference type="NCBIfam" id="TIGR00433">
    <property type="entry name" value="bioB"/>
    <property type="match status" value="1"/>
</dbReference>
<dbReference type="PANTHER" id="PTHR22976">
    <property type="entry name" value="BIOTIN SYNTHASE"/>
    <property type="match status" value="1"/>
</dbReference>
<dbReference type="PANTHER" id="PTHR22976:SF2">
    <property type="entry name" value="BIOTIN SYNTHASE, MITOCHONDRIAL"/>
    <property type="match status" value="1"/>
</dbReference>
<dbReference type="Pfam" id="PF06968">
    <property type="entry name" value="BATS"/>
    <property type="match status" value="1"/>
</dbReference>
<dbReference type="Pfam" id="PF04055">
    <property type="entry name" value="Radical_SAM"/>
    <property type="match status" value="1"/>
</dbReference>
<dbReference type="PIRSF" id="PIRSF001619">
    <property type="entry name" value="Biotin_synth"/>
    <property type="match status" value="1"/>
</dbReference>
<dbReference type="SFLD" id="SFLDF00272">
    <property type="entry name" value="biotin_synthase"/>
    <property type="match status" value="1"/>
</dbReference>
<dbReference type="SFLD" id="SFLDG01278">
    <property type="entry name" value="biotin_synthase_like"/>
    <property type="match status" value="1"/>
</dbReference>
<dbReference type="SMART" id="SM00876">
    <property type="entry name" value="BATS"/>
    <property type="match status" value="1"/>
</dbReference>
<dbReference type="SMART" id="SM00729">
    <property type="entry name" value="Elp3"/>
    <property type="match status" value="1"/>
</dbReference>
<dbReference type="SUPFAM" id="SSF102114">
    <property type="entry name" value="Radical SAM enzymes"/>
    <property type="match status" value="1"/>
</dbReference>
<dbReference type="PROSITE" id="PS51918">
    <property type="entry name" value="RADICAL_SAM"/>
    <property type="match status" value="1"/>
</dbReference>
<evidence type="ECO:0000255" key="1">
    <source>
        <dbReference type="HAMAP-Rule" id="MF_01694"/>
    </source>
</evidence>
<evidence type="ECO:0000255" key="2">
    <source>
        <dbReference type="PROSITE-ProRule" id="PRU01266"/>
    </source>
</evidence>
<keyword id="KW-0001">2Fe-2S</keyword>
<keyword id="KW-0004">4Fe-4S</keyword>
<keyword id="KW-0093">Biotin biosynthesis</keyword>
<keyword id="KW-0408">Iron</keyword>
<keyword id="KW-0411">Iron-sulfur</keyword>
<keyword id="KW-0479">Metal-binding</keyword>
<keyword id="KW-0949">S-adenosyl-L-methionine</keyword>
<keyword id="KW-0808">Transferase</keyword>